<name>MEK1_YEAST</name>
<organism>
    <name type="scientific">Saccharomyces cerevisiae (strain ATCC 204508 / S288c)</name>
    <name type="common">Baker's yeast</name>
    <dbReference type="NCBI Taxonomy" id="559292"/>
    <lineage>
        <taxon>Eukaryota</taxon>
        <taxon>Fungi</taxon>
        <taxon>Dikarya</taxon>
        <taxon>Ascomycota</taxon>
        <taxon>Saccharomycotina</taxon>
        <taxon>Saccharomycetes</taxon>
        <taxon>Saccharomycetales</taxon>
        <taxon>Saccharomycetaceae</taxon>
        <taxon>Saccharomyces</taxon>
    </lineage>
</organism>
<sequence length="497" mass="56850">MRPLYSCNLATKDDIEMAGGVAPAHLEVNVGGYNTEQTIPIVKHQLVKVGRNDKECQLVLTNPSISSVHCVFWCVFFDEDSIPMFYVKDCSLNGTYLNGLLLKRDKTYLLKHCDVIELSQGSEENDIKKTRLVFMINDDLQSSLDPKLLDQMGFLREVDQWEITNRIVGNGTFGHVLITHNSKERDEDVCYHPENYAVKIIKLKPNKFDKEARILLRLDHPNIIKVYHTFCDRNNHLYIFQDLIPGGDLFSYLAKGDCLTSMSETESLLIVFQILQALNYLHDQDIVHRDLKLDNILLCTPEPCTRIVLADFGIAKDLNSNKERMHTVVGTPEYCAPEVGFRANRKAYQSFSRAATLEQRGYDSKCDLWSLGVITHIMLTGISPFYGDGSERSIIQNAKIGKLNFKLKQWDIVSDNAKSFVKDLLQTDVVKRLNSKQGLKHIWIAKHLSQLERLYYKKILCNNEGPKLESINSDWKRKLPKSVIISQAIPKKKKVLE</sequence>
<evidence type="ECO:0000255" key="1">
    <source>
        <dbReference type="PROSITE-ProRule" id="PRU00086"/>
    </source>
</evidence>
<evidence type="ECO:0000255" key="2">
    <source>
        <dbReference type="PROSITE-ProRule" id="PRU00159"/>
    </source>
</evidence>
<evidence type="ECO:0000255" key="3">
    <source>
        <dbReference type="PROSITE-ProRule" id="PRU10027"/>
    </source>
</evidence>
<evidence type="ECO:0000305" key="4"/>
<evidence type="ECO:0007829" key="5">
    <source>
        <dbReference type="PDB" id="5YYX"/>
    </source>
</evidence>
<dbReference type="EC" id="2.7.11.1"/>
<dbReference type="EMBL" id="X61208">
    <property type="protein sequence ID" value="CAA43522.1"/>
    <property type="molecule type" value="Genomic_DNA"/>
</dbReference>
<dbReference type="EMBL" id="X63112">
    <property type="protein sequence ID" value="CAA44825.1"/>
    <property type="molecule type" value="Genomic_DNA"/>
</dbReference>
<dbReference type="EMBL" id="X95720">
    <property type="protein sequence ID" value="CAA65038.1"/>
    <property type="molecule type" value="Genomic_DNA"/>
</dbReference>
<dbReference type="EMBL" id="Z75259">
    <property type="protein sequence ID" value="CAA99680.1"/>
    <property type="molecule type" value="Genomic_DNA"/>
</dbReference>
<dbReference type="EMBL" id="BK006948">
    <property type="protein sequence ID" value="DAA11112.1"/>
    <property type="molecule type" value="Genomic_DNA"/>
</dbReference>
<dbReference type="PIR" id="S20174">
    <property type="entry name" value="S20174"/>
</dbReference>
<dbReference type="RefSeq" id="NP_014996.3">
    <property type="nucleotide sequence ID" value="NM_001183771.3"/>
</dbReference>
<dbReference type="PDB" id="5YYX">
    <property type="method" value="X-ray"/>
    <property type="resolution" value="1.68 A"/>
    <property type="chains" value="A=20-139"/>
</dbReference>
<dbReference type="PDB" id="5YYZ">
    <property type="method" value="X-ray"/>
    <property type="resolution" value="1.80 A"/>
    <property type="chains" value="A=20-139"/>
</dbReference>
<dbReference type="PDBsum" id="5YYX"/>
<dbReference type="PDBsum" id="5YYZ"/>
<dbReference type="SMR" id="P24719"/>
<dbReference type="BioGRID" id="34736">
    <property type="interactions" value="198"/>
</dbReference>
<dbReference type="DIP" id="DIP-675N"/>
<dbReference type="FunCoup" id="P24719">
    <property type="interactions" value="387"/>
</dbReference>
<dbReference type="IntAct" id="P24719">
    <property type="interactions" value="38"/>
</dbReference>
<dbReference type="STRING" id="4932.YOR351C"/>
<dbReference type="iPTMnet" id="P24719"/>
<dbReference type="PaxDb" id="4932-YOR351C"/>
<dbReference type="PeptideAtlas" id="P24719"/>
<dbReference type="EnsemblFungi" id="YOR351C_mRNA">
    <property type="protein sequence ID" value="YOR351C"/>
    <property type="gene ID" value="YOR351C"/>
</dbReference>
<dbReference type="GeneID" id="854533"/>
<dbReference type="KEGG" id="sce:YOR351C"/>
<dbReference type="AGR" id="SGD:S000005878"/>
<dbReference type="SGD" id="S000005878">
    <property type="gene designation" value="MEK1"/>
</dbReference>
<dbReference type="VEuPathDB" id="FungiDB:YOR351C"/>
<dbReference type="eggNOG" id="KOG0032">
    <property type="taxonomic scope" value="Eukaryota"/>
</dbReference>
<dbReference type="GeneTree" id="ENSGT00960000189172"/>
<dbReference type="HOGENOM" id="CLU_000288_63_0_1"/>
<dbReference type="InParanoid" id="P24719"/>
<dbReference type="OMA" id="EDQYTIT"/>
<dbReference type="OrthoDB" id="74764at2759"/>
<dbReference type="BioCyc" id="YEAST:G3O-33822-MONOMER"/>
<dbReference type="BRENDA" id="2.7.11.1">
    <property type="organism ID" value="984"/>
</dbReference>
<dbReference type="BioGRID-ORCS" id="854533">
    <property type="hits" value="0 hits in 13 CRISPR screens"/>
</dbReference>
<dbReference type="PRO" id="PR:P24719"/>
<dbReference type="Proteomes" id="UP000002311">
    <property type="component" value="Chromosome XV"/>
</dbReference>
<dbReference type="RNAct" id="P24719">
    <property type="molecule type" value="protein"/>
</dbReference>
<dbReference type="GO" id="GO:0005737">
    <property type="term" value="C:cytoplasm"/>
    <property type="evidence" value="ECO:0000318"/>
    <property type="project" value="GO_Central"/>
</dbReference>
<dbReference type="GO" id="GO:0005634">
    <property type="term" value="C:nucleus"/>
    <property type="evidence" value="ECO:0000314"/>
    <property type="project" value="SGD"/>
</dbReference>
<dbReference type="GO" id="GO:0005524">
    <property type="term" value="F:ATP binding"/>
    <property type="evidence" value="ECO:0007669"/>
    <property type="project" value="UniProtKB-KW"/>
</dbReference>
<dbReference type="GO" id="GO:0004672">
    <property type="term" value="F:protein kinase activity"/>
    <property type="evidence" value="ECO:0007005"/>
    <property type="project" value="SGD"/>
</dbReference>
<dbReference type="GO" id="GO:0106310">
    <property type="term" value="F:protein serine kinase activity"/>
    <property type="evidence" value="ECO:0007669"/>
    <property type="project" value="RHEA"/>
</dbReference>
<dbReference type="GO" id="GO:0004674">
    <property type="term" value="F:protein serine/threonine kinase activity"/>
    <property type="evidence" value="ECO:0000314"/>
    <property type="project" value="SGD"/>
</dbReference>
<dbReference type="GO" id="GO:0051321">
    <property type="term" value="P:meiotic cell cycle"/>
    <property type="evidence" value="ECO:0000315"/>
    <property type="project" value="SGD"/>
</dbReference>
<dbReference type="GO" id="GO:0051598">
    <property type="term" value="P:meiotic recombination checkpoint signaling"/>
    <property type="evidence" value="ECO:0000315"/>
    <property type="project" value="SGD"/>
</dbReference>
<dbReference type="GO" id="GO:0007165">
    <property type="term" value="P:signal transduction"/>
    <property type="evidence" value="ECO:0000318"/>
    <property type="project" value="GO_Central"/>
</dbReference>
<dbReference type="CDD" id="cd22670">
    <property type="entry name" value="FHA_MEK1-like"/>
    <property type="match status" value="1"/>
</dbReference>
<dbReference type="CDD" id="cd05117">
    <property type="entry name" value="STKc_CAMK"/>
    <property type="match status" value="1"/>
</dbReference>
<dbReference type="FunFam" id="1.10.510.10:FF:001021">
    <property type="entry name" value="Serine/threonine protein kinase"/>
    <property type="match status" value="1"/>
</dbReference>
<dbReference type="Gene3D" id="2.60.200.20">
    <property type="match status" value="1"/>
</dbReference>
<dbReference type="Gene3D" id="1.10.510.10">
    <property type="entry name" value="Transferase(Phosphotransferase) domain 1"/>
    <property type="match status" value="1"/>
</dbReference>
<dbReference type="InterPro" id="IPR000253">
    <property type="entry name" value="FHA_dom"/>
</dbReference>
<dbReference type="InterPro" id="IPR011009">
    <property type="entry name" value="Kinase-like_dom_sf"/>
</dbReference>
<dbReference type="InterPro" id="IPR000719">
    <property type="entry name" value="Prot_kinase_dom"/>
</dbReference>
<dbReference type="InterPro" id="IPR017441">
    <property type="entry name" value="Protein_kinase_ATP_BS"/>
</dbReference>
<dbReference type="InterPro" id="IPR008271">
    <property type="entry name" value="Ser/Thr_kinase_AS"/>
</dbReference>
<dbReference type="InterPro" id="IPR008984">
    <property type="entry name" value="SMAD_FHA_dom_sf"/>
</dbReference>
<dbReference type="PANTHER" id="PTHR24347">
    <property type="entry name" value="SERINE/THREONINE-PROTEIN KINASE"/>
    <property type="match status" value="1"/>
</dbReference>
<dbReference type="Pfam" id="PF00498">
    <property type="entry name" value="FHA"/>
    <property type="match status" value="1"/>
</dbReference>
<dbReference type="Pfam" id="PF00069">
    <property type="entry name" value="Pkinase"/>
    <property type="match status" value="1"/>
</dbReference>
<dbReference type="SMART" id="SM00240">
    <property type="entry name" value="FHA"/>
    <property type="match status" value="1"/>
</dbReference>
<dbReference type="SMART" id="SM00220">
    <property type="entry name" value="S_TKc"/>
    <property type="match status" value="1"/>
</dbReference>
<dbReference type="SUPFAM" id="SSF56112">
    <property type="entry name" value="Protein kinase-like (PK-like)"/>
    <property type="match status" value="1"/>
</dbReference>
<dbReference type="SUPFAM" id="SSF49879">
    <property type="entry name" value="SMAD/FHA domain"/>
    <property type="match status" value="1"/>
</dbReference>
<dbReference type="PROSITE" id="PS50006">
    <property type="entry name" value="FHA_DOMAIN"/>
    <property type="match status" value="1"/>
</dbReference>
<dbReference type="PROSITE" id="PS00107">
    <property type="entry name" value="PROTEIN_KINASE_ATP"/>
    <property type="match status" value="1"/>
</dbReference>
<dbReference type="PROSITE" id="PS50011">
    <property type="entry name" value="PROTEIN_KINASE_DOM"/>
    <property type="match status" value="1"/>
</dbReference>
<dbReference type="PROSITE" id="PS00108">
    <property type="entry name" value="PROTEIN_KINASE_ST"/>
    <property type="match status" value="1"/>
</dbReference>
<feature type="chain" id="PRO_0000086321" description="Meiosis-specific serine/threonine-protein kinase MEK1">
    <location>
        <begin position="1"/>
        <end position="497"/>
    </location>
</feature>
<feature type="domain" description="FHA" evidence="1">
    <location>
        <begin position="47"/>
        <end position="102"/>
    </location>
</feature>
<feature type="domain" description="Protein kinase" evidence="2">
    <location>
        <begin position="162"/>
        <end position="444"/>
    </location>
</feature>
<feature type="active site" description="Proton acceptor" evidence="2 3">
    <location>
        <position position="290"/>
    </location>
</feature>
<feature type="binding site" evidence="2">
    <location>
        <begin position="168"/>
        <end position="176"/>
    </location>
    <ligand>
        <name>ATP</name>
        <dbReference type="ChEBI" id="CHEBI:30616"/>
    </ligand>
</feature>
<feature type="binding site" evidence="2">
    <location>
        <position position="199"/>
    </location>
    <ligand>
        <name>ATP</name>
        <dbReference type="ChEBI" id="CHEBI:30616"/>
    </ligand>
</feature>
<feature type="strand" evidence="5">
    <location>
        <begin position="23"/>
        <end position="30"/>
    </location>
</feature>
<feature type="strand" evidence="5">
    <location>
        <begin position="33"/>
        <end position="41"/>
    </location>
</feature>
<feature type="strand" evidence="5">
    <location>
        <begin position="47"/>
        <end position="51"/>
    </location>
</feature>
<feature type="turn" evidence="5">
    <location>
        <begin position="53"/>
        <end position="55"/>
    </location>
</feature>
<feature type="strand" evidence="5">
    <location>
        <begin position="57"/>
        <end position="59"/>
    </location>
</feature>
<feature type="strand" evidence="5">
    <location>
        <begin position="70"/>
        <end position="77"/>
    </location>
</feature>
<feature type="turn" evidence="5">
    <location>
        <begin position="78"/>
        <end position="81"/>
    </location>
</feature>
<feature type="strand" evidence="5">
    <location>
        <begin position="82"/>
        <end position="89"/>
    </location>
</feature>
<feature type="strand" evidence="5">
    <location>
        <begin position="95"/>
        <end position="97"/>
    </location>
</feature>
<feature type="strand" evidence="5">
    <location>
        <begin position="107"/>
        <end position="109"/>
    </location>
</feature>
<feature type="strand" evidence="5">
    <location>
        <begin position="115"/>
        <end position="118"/>
    </location>
</feature>
<feature type="strand" evidence="5">
    <location>
        <begin position="130"/>
        <end position="136"/>
    </location>
</feature>
<gene>
    <name type="primary">MEK1</name>
    <name type="synonym">MRE4</name>
    <name type="ordered locus">YOR351C</name>
    <name type="ORF">O6357</name>
</gene>
<keyword id="KW-0002">3D-structure</keyword>
<keyword id="KW-0067">ATP-binding</keyword>
<keyword id="KW-0418">Kinase</keyword>
<keyword id="KW-0469">Meiosis</keyword>
<keyword id="KW-0547">Nucleotide-binding</keyword>
<keyword id="KW-1185">Reference proteome</keyword>
<keyword id="KW-0723">Serine/threonine-protein kinase</keyword>
<keyword id="KW-0808">Transferase</keyword>
<proteinExistence type="evidence at protein level"/>
<protein>
    <recommendedName>
        <fullName>Meiosis-specific serine/threonine-protein kinase MEK1</fullName>
        <ecNumber>2.7.11.1</ecNumber>
    </recommendedName>
</protein>
<accession>P24719</accession>
<accession>D6W346</accession>
<comment type="function">
    <text>Probable protein kinase required for meiotic recombination.</text>
</comment>
<comment type="catalytic activity">
    <reaction>
        <text>L-seryl-[protein] + ATP = O-phospho-L-seryl-[protein] + ADP + H(+)</text>
        <dbReference type="Rhea" id="RHEA:17989"/>
        <dbReference type="Rhea" id="RHEA-COMP:9863"/>
        <dbReference type="Rhea" id="RHEA-COMP:11604"/>
        <dbReference type="ChEBI" id="CHEBI:15378"/>
        <dbReference type="ChEBI" id="CHEBI:29999"/>
        <dbReference type="ChEBI" id="CHEBI:30616"/>
        <dbReference type="ChEBI" id="CHEBI:83421"/>
        <dbReference type="ChEBI" id="CHEBI:456216"/>
        <dbReference type="EC" id="2.7.11.1"/>
    </reaction>
</comment>
<comment type="catalytic activity">
    <reaction>
        <text>L-threonyl-[protein] + ATP = O-phospho-L-threonyl-[protein] + ADP + H(+)</text>
        <dbReference type="Rhea" id="RHEA:46608"/>
        <dbReference type="Rhea" id="RHEA-COMP:11060"/>
        <dbReference type="Rhea" id="RHEA-COMP:11605"/>
        <dbReference type="ChEBI" id="CHEBI:15378"/>
        <dbReference type="ChEBI" id="CHEBI:30013"/>
        <dbReference type="ChEBI" id="CHEBI:30616"/>
        <dbReference type="ChEBI" id="CHEBI:61977"/>
        <dbReference type="ChEBI" id="CHEBI:456216"/>
        <dbReference type="EC" id="2.7.11.1"/>
    </reaction>
</comment>
<comment type="similarity">
    <text evidence="4">Belongs to the protein kinase superfamily. CAMK Ser/Thr protein kinase family. CHEK2 subfamily.</text>
</comment>
<reference key="1">
    <citation type="journal article" date="1991" name="Genes Dev.">
        <title>A meiosis-specific protein kinase homolog required for chromosome synapsis and recombination.</title>
        <authorList>
            <person name="Rockmill B."/>
            <person name="Roeder G.S."/>
        </authorList>
    </citation>
    <scope>NUCLEOTIDE SEQUENCE [GENOMIC DNA]</scope>
</reference>
<reference key="2">
    <citation type="journal article" date="1992" name="Nucleic Acids Res.">
        <title>The MRE4 gene encodes a novel protein kinase homologue required for meiotic recombination in Saccharomyces cerevisiae.</title>
        <authorList>
            <person name="Leem S.-H."/>
            <person name="Ogawa H."/>
        </authorList>
    </citation>
    <scope>NUCLEOTIDE SEQUENCE [GENOMIC DNA]</scope>
</reference>
<reference key="3">
    <citation type="journal article" date="1997" name="Nature">
        <title>The nucleotide sequence of Saccharomyces cerevisiae chromosome XV.</title>
        <authorList>
            <person name="Dujon B."/>
            <person name="Albermann K."/>
            <person name="Aldea M."/>
            <person name="Alexandraki D."/>
            <person name="Ansorge W."/>
            <person name="Arino J."/>
            <person name="Benes V."/>
            <person name="Bohn C."/>
            <person name="Bolotin-Fukuhara M."/>
            <person name="Bordonne R."/>
            <person name="Boyer J."/>
            <person name="Camasses A."/>
            <person name="Casamayor A."/>
            <person name="Casas C."/>
            <person name="Cheret G."/>
            <person name="Cziepluch C."/>
            <person name="Daignan-Fornier B."/>
            <person name="Dang V.-D."/>
            <person name="de Haan M."/>
            <person name="Delius H."/>
            <person name="Durand P."/>
            <person name="Fairhead C."/>
            <person name="Feldmann H."/>
            <person name="Gaillon L."/>
            <person name="Galisson F."/>
            <person name="Gamo F.-J."/>
            <person name="Gancedo C."/>
            <person name="Goffeau A."/>
            <person name="Goulding S.E."/>
            <person name="Grivell L.A."/>
            <person name="Habbig B."/>
            <person name="Hand N.J."/>
            <person name="Hani J."/>
            <person name="Hattenhorst U."/>
            <person name="Hebling U."/>
            <person name="Hernando Y."/>
            <person name="Herrero E."/>
            <person name="Heumann K."/>
            <person name="Hiesel R."/>
            <person name="Hilger F."/>
            <person name="Hofmann B."/>
            <person name="Hollenberg C.P."/>
            <person name="Hughes B."/>
            <person name="Jauniaux J.-C."/>
            <person name="Kalogeropoulos A."/>
            <person name="Katsoulou C."/>
            <person name="Kordes E."/>
            <person name="Lafuente M.J."/>
            <person name="Landt O."/>
            <person name="Louis E.J."/>
            <person name="Maarse A.C."/>
            <person name="Madania A."/>
            <person name="Mannhaupt G."/>
            <person name="Marck C."/>
            <person name="Martin R.P."/>
            <person name="Mewes H.-W."/>
            <person name="Michaux G."/>
            <person name="Paces V."/>
            <person name="Parle-McDermott A.G."/>
            <person name="Pearson B.M."/>
            <person name="Perrin A."/>
            <person name="Pettersson B."/>
            <person name="Poch O."/>
            <person name="Pohl T.M."/>
            <person name="Poirey R."/>
            <person name="Portetelle D."/>
            <person name="Pujol A."/>
            <person name="Purnelle B."/>
            <person name="Ramezani Rad M."/>
            <person name="Rechmann S."/>
            <person name="Schwager C."/>
            <person name="Schweizer M."/>
            <person name="Sor F."/>
            <person name="Sterky F."/>
            <person name="Tarassov I.A."/>
            <person name="Teodoru C."/>
            <person name="Tettelin H."/>
            <person name="Thierry A."/>
            <person name="Tobiasch E."/>
            <person name="Tzermia M."/>
            <person name="Uhlen M."/>
            <person name="Unseld M."/>
            <person name="Valens M."/>
            <person name="Vandenbol M."/>
            <person name="Vetter I."/>
            <person name="Vlcek C."/>
            <person name="Voet M."/>
            <person name="Volckaert G."/>
            <person name="Voss H."/>
            <person name="Wambutt R."/>
            <person name="Wedler H."/>
            <person name="Wiemann S."/>
            <person name="Winsor B."/>
            <person name="Wolfe K.H."/>
            <person name="Zollner A."/>
            <person name="Zumstein E."/>
            <person name="Kleine K."/>
        </authorList>
    </citation>
    <scope>NUCLEOTIDE SEQUENCE [LARGE SCALE GENOMIC DNA]</scope>
    <source>
        <strain>ATCC 204508 / S288c</strain>
    </source>
</reference>
<reference key="4">
    <citation type="journal article" date="2014" name="G3 (Bethesda)">
        <title>The reference genome sequence of Saccharomyces cerevisiae: Then and now.</title>
        <authorList>
            <person name="Engel S.R."/>
            <person name="Dietrich F.S."/>
            <person name="Fisk D.G."/>
            <person name="Binkley G."/>
            <person name="Balakrishnan R."/>
            <person name="Costanzo M.C."/>
            <person name="Dwight S.S."/>
            <person name="Hitz B.C."/>
            <person name="Karra K."/>
            <person name="Nash R.S."/>
            <person name="Weng S."/>
            <person name="Wong E.D."/>
            <person name="Lloyd P."/>
            <person name="Skrzypek M.S."/>
            <person name="Miyasato S.R."/>
            <person name="Simison M."/>
            <person name="Cherry J.M."/>
        </authorList>
    </citation>
    <scope>GENOME REANNOTATION</scope>
    <source>
        <strain>ATCC 204508 / S288c</strain>
    </source>
</reference>
<reference key="5">
    <citation type="journal article" date="1996" name="Yeast">
        <title>Nucleotide sequence analysis of a 40 kb segment on the right arm of yeast chromosome XV reveals 18 open reading frames including a new pyruvate kinase and three homologues to chromosome I genes.</title>
        <authorList>
            <person name="Purnelle B."/>
            <person name="Goffeau A."/>
        </authorList>
    </citation>
    <scope>NUCLEOTIDE SEQUENCE [GENOMIC DNA] OF 150-497</scope>
    <source>
        <strain>ATCC 90843 / S288c / FY73</strain>
    </source>
</reference>